<accession>P04713</accession>
<comment type="function">
    <text>Required for the synthesis of amylose in endosperm.</text>
</comment>
<comment type="catalytic activity">
    <reaction>
        <text>an NDP-alpha-D-glucose + [(1-&gt;4)-alpha-D-glucosyl](n) = [(1-&gt;4)-alpha-D-glucosyl](n+1) + a ribonucleoside 5'-diphosphate + H(+)</text>
        <dbReference type="Rhea" id="RHEA:15873"/>
        <dbReference type="Rhea" id="RHEA-COMP:9584"/>
        <dbReference type="Rhea" id="RHEA-COMP:9587"/>
        <dbReference type="ChEBI" id="CHEBI:15378"/>
        <dbReference type="ChEBI" id="CHEBI:15444"/>
        <dbReference type="ChEBI" id="CHEBI:57930"/>
        <dbReference type="ChEBI" id="CHEBI:76533"/>
        <dbReference type="EC" id="2.4.1.242"/>
    </reaction>
</comment>
<comment type="pathway">
    <text>Glycan biosynthesis; starch biosynthesis.</text>
</comment>
<comment type="subcellular location">
    <subcellularLocation>
        <location>Plastid</location>
        <location>Chloroplast</location>
    </subcellularLocation>
    <subcellularLocation>
        <location>Plastid</location>
        <location>Amyloplast</location>
    </subcellularLocation>
    <text>Amyloplast or chloroplast, granule-bound.</text>
</comment>
<comment type="similarity">
    <text evidence="2">Belongs to the glycosyltransferase 1 family. Bacterial/plant glycogen synthase subfamily.</text>
</comment>
<evidence type="ECO:0000250" key="1"/>
<evidence type="ECO:0000305" key="2"/>
<sequence>MAALATSQLVATRAGLGVPDASTFRRGAAQGLRGARASAAADTLSMRTSARAAPRHQQQARRGGRFPSLVVCASAGMNVVFVGAEMAPWSKTGGLGDVLGGLPPAMAANGHRVMVVSPRYDQYKDAWDTSVVSEIKMGDGYETVRFFHCYKRGVDRVFVDHPLFLERVWGKTEEKIYGPVAGTDYRDNQLRFSLLCQAALEAPRILSLNNNPYFSGPYGEDVVFVCNDWHTGPLSCYLKSNYQSHGIYRDAKTAFCIHNISYQGRFAFSDYPELNLPERFKSSFDFIDGYEKPVEGRKINWMKAGILEADRVLTVSPYYAEELISGIARGCELDNIMRLTGITGIVNGMDVSEWDPSRDKYIAVKYDVSTAVEAKALNKEALQAEVGLPVDRNIPLVAFIGRLEEQKGPDVMAAAIPQLMEMVEDVQIVLLGTGKKKFERMLMSAEEKFPGKVRAVVKFNAALAHHIMAGADVLAVTSRFEPCGLIQLQGMRYGTPCACASTGGLVDTIIEGKTGFHMGRLSVDCNVVEPADVKKVATTLQRAIKVVGTPAYEEMVRNCMIQDLSWKGPAKNWENVLLSLGVAGGEPGVEGEEIAPLAKENVAAP</sequence>
<gene>
    <name type="primary">WAXY</name>
</gene>
<organism>
    <name type="scientific">Zea mays</name>
    <name type="common">Maize</name>
    <dbReference type="NCBI Taxonomy" id="4577"/>
    <lineage>
        <taxon>Eukaryota</taxon>
        <taxon>Viridiplantae</taxon>
        <taxon>Streptophyta</taxon>
        <taxon>Embryophyta</taxon>
        <taxon>Tracheophyta</taxon>
        <taxon>Spermatophyta</taxon>
        <taxon>Magnoliopsida</taxon>
        <taxon>Liliopsida</taxon>
        <taxon>Poales</taxon>
        <taxon>Poaceae</taxon>
        <taxon>PACMAD clade</taxon>
        <taxon>Panicoideae</taxon>
        <taxon>Andropogonodae</taxon>
        <taxon>Andropogoneae</taxon>
        <taxon>Tripsacinae</taxon>
        <taxon>Zea</taxon>
    </lineage>
</organism>
<feature type="transit peptide" description="Chloroplast">
    <location>
        <begin position="1"/>
        <end position="72"/>
    </location>
</feature>
<feature type="chain" id="PRO_0000011129" description="Granule-bound starch synthase 1, chloroplastic/amyloplastic">
    <location>
        <begin position="73"/>
        <end position="605"/>
    </location>
</feature>
<feature type="binding site" evidence="1">
    <location>
        <position position="91"/>
    </location>
    <ligand>
        <name>ADP-alpha-D-glucose</name>
        <dbReference type="ChEBI" id="CHEBI:57498"/>
    </ligand>
</feature>
<name>SSG1_MAIZE</name>
<protein>
    <recommendedName>
        <fullName>Granule-bound starch synthase 1, chloroplastic/amyloplastic</fullName>
        <ecNumber>2.4.1.242</ecNumber>
    </recommendedName>
    <alternativeName>
        <fullName>Granule-bound starch synthase I</fullName>
        <shortName>GBSS-I</shortName>
    </alternativeName>
</protein>
<proteinExistence type="inferred from homology"/>
<keyword id="KW-0035">Amyloplast</keyword>
<keyword id="KW-0150">Chloroplast</keyword>
<keyword id="KW-0328">Glycosyltransferase</keyword>
<keyword id="KW-0934">Plastid</keyword>
<keyword id="KW-1185">Reference proteome</keyword>
<keyword id="KW-0750">Starch biosynthesis</keyword>
<keyword id="KW-0808">Transferase</keyword>
<keyword id="KW-0809">Transit peptide</keyword>
<reference key="1">
    <citation type="journal article" date="1986" name="Mol. Gen. Genet.">
        <title>Molecular analysis of the waxy locus of Zea mays.</title>
        <authorList>
            <person name="Kloesgen R.B."/>
            <person name="Gierl A."/>
            <person name="Schwarz-Sommer Z."/>
            <person name="Saedler H."/>
        </authorList>
    </citation>
    <scope>NUCLEOTIDE SEQUENCE [GENOMIC DNA]</scope>
</reference>
<dbReference type="EC" id="2.4.1.242"/>
<dbReference type="EMBL" id="X03935">
    <property type="protein sequence ID" value="CAA27574.1"/>
    <property type="molecule type" value="Genomic_DNA"/>
</dbReference>
<dbReference type="PIR" id="S07314">
    <property type="entry name" value="S07314"/>
</dbReference>
<dbReference type="SMR" id="P04713"/>
<dbReference type="FunCoup" id="P04713">
    <property type="interactions" value="168"/>
</dbReference>
<dbReference type="STRING" id="4577.P04713"/>
<dbReference type="CAZy" id="GT5">
    <property type="family name" value="Glycosyltransferase Family 5"/>
</dbReference>
<dbReference type="PaxDb" id="4577-GRMZM2G024993_P01"/>
<dbReference type="MaizeGDB" id="15806"/>
<dbReference type="eggNOG" id="ENOG502QQX3">
    <property type="taxonomic scope" value="Eukaryota"/>
</dbReference>
<dbReference type="InParanoid" id="P04713"/>
<dbReference type="BRENDA" id="2.4.1.242">
    <property type="organism ID" value="6752"/>
</dbReference>
<dbReference type="UniPathway" id="UPA00152"/>
<dbReference type="Proteomes" id="UP000007305">
    <property type="component" value="Unplaced"/>
</dbReference>
<dbReference type="ExpressionAtlas" id="P04713">
    <property type="expression patterns" value="baseline and differential"/>
</dbReference>
<dbReference type="GO" id="GO:0009501">
    <property type="term" value="C:amyloplast"/>
    <property type="evidence" value="ECO:0007669"/>
    <property type="project" value="UniProtKB-SubCell"/>
</dbReference>
<dbReference type="GO" id="GO:0009507">
    <property type="term" value="C:chloroplast"/>
    <property type="evidence" value="ECO:0007669"/>
    <property type="project" value="UniProtKB-SubCell"/>
</dbReference>
<dbReference type="GO" id="GO:0004373">
    <property type="term" value="F:alpha-1,4-glucan glucosyltransferase (UDP-glucose donor) activity"/>
    <property type="evidence" value="ECO:0007669"/>
    <property type="project" value="InterPro"/>
</dbReference>
<dbReference type="GO" id="GO:0019252">
    <property type="term" value="P:starch biosynthetic process"/>
    <property type="evidence" value="ECO:0007669"/>
    <property type="project" value="UniProtKB-UniPathway"/>
</dbReference>
<dbReference type="CDD" id="cd03791">
    <property type="entry name" value="GT5_Glycogen_synthase_DULL1-like"/>
    <property type="match status" value="1"/>
</dbReference>
<dbReference type="FunFam" id="3.40.50.2000:FF:000073">
    <property type="entry name" value="Starch synthase, chloroplastic/amyloplastic"/>
    <property type="match status" value="1"/>
</dbReference>
<dbReference type="FunFam" id="3.40.50.2000:FF:000090">
    <property type="entry name" value="Starch synthase, chloroplastic/amyloplastic"/>
    <property type="match status" value="1"/>
</dbReference>
<dbReference type="Gene3D" id="3.40.50.2000">
    <property type="entry name" value="Glycogen Phosphorylase B"/>
    <property type="match status" value="2"/>
</dbReference>
<dbReference type="HAMAP" id="MF_00484">
    <property type="entry name" value="Glycogen_synth"/>
    <property type="match status" value="1"/>
</dbReference>
<dbReference type="InterPro" id="IPR001296">
    <property type="entry name" value="Glyco_trans_1"/>
</dbReference>
<dbReference type="InterPro" id="IPR011835">
    <property type="entry name" value="GS/SS"/>
</dbReference>
<dbReference type="InterPro" id="IPR013534">
    <property type="entry name" value="Starch_synth_cat_dom"/>
</dbReference>
<dbReference type="NCBIfam" id="TIGR02095">
    <property type="entry name" value="glgA"/>
    <property type="match status" value="1"/>
</dbReference>
<dbReference type="PANTHER" id="PTHR45825">
    <property type="entry name" value="GRANULE-BOUND STARCH SYNTHASE 1, CHLOROPLASTIC/AMYLOPLASTIC"/>
    <property type="match status" value="1"/>
</dbReference>
<dbReference type="PANTHER" id="PTHR45825:SF3">
    <property type="entry name" value="GRANULE-BOUND STARCH SYNTHASE 1, CHLOROPLASTIC_AMYLOPLASTIC"/>
    <property type="match status" value="1"/>
</dbReference>
<dbReference type="Pfam" id="PF08323">
    <property type="entry name" value="Glyco_transf_5"/>
    <property type="match status" value="1"/>
</dbReference>
<dbReference type="Pfam" id="PF00534">
    <property type="entry name" value="Glycos_transf_1"/>
    <property type="match status" value="1"/>
</dbReference>
<dbReference type="SUPFAM" id="SSF53756">
    <property type="entry name" value="UDP-Glycosyltransferase/glycogen phosphorylase"/>
    <property type="match status" value="1"/>
</dbReference>